<keyword id="KW-0129">CBS domain</keyword>
<keyword id="KW-0677">Repeat</keyword>
<protein>
    <recommendedName>
        <fullName>Possible hemolysin C</fullName>
    </recommendedName>
</protein>
<sequence length="301" mass="34149">MLKSSKKEDDSKKNHDNKSIFHLRKLFSPIKSLFSNKVPDDFFSVIKRLKTNSQKMTLDERNILANLLKLKGKTIEDIMVPRSDIAAIKLTTNIEELNESIKVKIPHTRTLIYDGTLDNIVGFIHIKDLFKALVTKQNFRLKKLIRKHIIAAPSMKLLDLLAKMRREKTHIAIVIDEYGGTDGLVTIEDVMEALVGRIDDEHDQKSEYDNYKVINNSTIISNARVEVEVLEEIIGEKLKDDDDEFDTISGLVLTKMGNVPAVGTKINVSENIEIEVTDANPRSLKQVKITLKNSLKRAKSS</sequence>
<organism>
    <name type="scientific">Rickettsia bellii (strain RML369-C)</name>
    <dbReference type="NCBI Taxonomy" id="336407"/>
    <lineage>
        <taxon>Bacteria</taxon>
        <taxon>Pseudomonadati</taxon>
        <taxon>Pseudomonadota</taxon>
        <taxon>Alphaproteobacteria</taxon>
        <taxon>Rickettsiales</taxon>
        <taxon>Rickettsiaceae</taxon>
        <taxon>Rickettsieae</taxon>
        <taxon>Rickettsia</taxon>
        <taxon>belli group</taxon>
    </lineage>
</organism>
<gene>
    <name type="primary">tlyC</name>
    <name type="ordered locus">RBE_1311</name>
</gene>
<feature type="chain" id="PRO_0000319028" description="Possible hemolysin C">
    <location>
        <begin position="1"/>
        <end position="301"/>
    </location>
</feature>
<feature type="domain" description="CBS 1" evidence="1">
    <location>
        <begin position="79"/>
        <end position="141"/>
    </location>
</feature>
<feature type="domain" description="CBS 2" evidence="1">
    <location>
        <begin position="144"/>
        <end position="201"/>
    </location>
</feature>
<accession>Q1RGX2</accession>
<proteinExistence type="inferred from homology"/>
<reference key="1">
    <citation type="journal article" date="2006" name="PLoS Genet.">
        <title>Genome sequence of Rickettsia bellii illuminates the role of amoebae in gene exchanges between intracellular pathogens.</title>
        <authorList>
            <person name="Ogata H."/>
            <person name="La Scola B."/>
            <person name="Audic S."/>
            <person name="Renesto P."/>
            <person name="Blanc G."/>
            <person name="Robert C."/>
            <person name="Fournier P.-E."/>
            <person name="Claverie J.-M."/>
            <person name="Raoult D."/>
        </authorList>
    </citation>
    <scope>NUCLEOTIDE SEQUENCE [LARGE SCALE GENOMIC DNA]</scope>
    <source>
        <strain>RML369-C</strain>
    </source>
</reference>
<evidence type="ECO:0000255" key="1">
    <source>
        <dbReference type="PROSITE-ProRule" id="PRU00703"/>
    </source>
</evidence>
<evidence type="ECO:0000305" key="2"/>
<dbReference type="EMBL" id="CP000087">
    <property type="protein sequence ID" value="ABE05392.1"/>
    <property type="molecule type" value="Genomic_DNA"/>
</dbReference>
<dbReference type="RefSeq" id="WP_011477962.1">
    <property type="nucleotide sequence ID" value="NC_007940.1"/>
</dbReference>
<dbReference type="SMR" id="Q1RGX2"/>
<dbReference type="KEGG" id="rbe:RBE_1311"/>
<dbReference type="eggNOG" id="COG1253">
    <property type="taxonomic scope" value="Bacteria"/>
</dbReference>
<dbReference type="HOGENOM" id="CLU_015237_3_1_5"/>
<dbReference type="OrthoDB" id="9805314at2"/>
<dbReference type="Proteomes" id="UP000001951">
    <property type="component" value="Chromosome"/>
</dbReference>
<dbReference type="GO" id="GO:0005886">
    <property type="term" value="C:plasma membrane"/>
    <property type="evidence" value="ECO:0007669"/>
    <property type="project" value="TreeGrafter"/>
</dbReference>
<dbReference type="GO" id="GO:0050660">
    <property type="term" value="F:flavin adenine dinucleotide binding"/>
    <property type="evidence" value="ECO:0007669"/>
    <property type="project" value="InterPro"/>
</dbReference>
<dbReference type="CDD" id="cd04590">
    <property type="entry name" value="CBS_pair_CorC_HlyC_assoc"/>
    <property type="match status" value="1"/>
</dbReference>
<dbReference type="FunFam" id="3.10.580.10:FF:000002">
    <property type="entry name" value="Magnesium/cobalt efflux protein CorC"/>
    <property type="match status" value="1"/>
</dbReference>
<dbReference type="Gene3D" id="3.30.465.10">
    <property type="match status" value="1"/>
</dbReference>
<dbReference type="Gene3D" id="3.10.580.10">
    <property type="entry name" value="CBS-domain"/>
    <property type="match status" value="1"/>
</dbReference>
<dbReference type="InterPro" id="IPR000644">
    <property type="entry name" value="CBS_dom"/>
</dbReference>
<dbReference type="InterPro" id="IPR046342">
    <property type="entry name" value="CBS_dom_sf"/>
</dbReference>
<dbReference type="InterPro" id="IPR036318">
    <property type="entry name" value="FAD-bd_PCMH-like_sf"/>
</dbReference>
<dbReference type="InterPro" id="IPR016169">
    <property type="entry name" value="FAD-bd_PCMH_sub2"/>
</dbReference>
<dbReference type="InterPro" id="IPR044751">
    <property type="entry name" value="Ion_transp-like_CBS"/>
</dbReference>
<dbReference type="InterPro" id="IPR005170">
    <property type="entry name" value="Transptr-assoc_dom"/>
</dbReference>
<dbReference type="PANTHER" id="PTHR22777">
    <property type="entry name" value="HEMOLYSIN-RELATED"/>
    <property type="match status" value="1"/>
</dbReference>
<dbReference type="PANTHER" id="PTHR22777:SF27">
    <property type="entry name" value="MAGNESIUM AND COBALT EFFLUX PROTEIN CORC"/>
    <property type="match status" value="1"/>
</dbReference>
<dbReference type="Pfam" id="PF00571">
    <property type="entry name" value="CBS"/>
    <property type="match status" value="1"/>
</dbReference>
<dbReference type="Pfam" id="PF03471">
    <property type="entry name" value="CorC_HlyC"/>
    <property type="match status" value="1"/>
</dbReference>
<dbReference type="SMART" id="SM01091">
    <property type="entry name" value="CorC_HlyC"/>
    <property type="match status" value="1"/>
</dbReference>
<dbReference type="SUPFAM" id="SSF54631">
    <property type="entry name" value="CBS-domain pair"/>
    <property type="match status" value="1"/>
</dbReference>
<dbReference type="SUPFAM" id="SSF56176">
    <property type="entry name" value="FAD-binding/transporter-associated domain-like"/>
    <property type="match status" value="1"/>
</dbReference>
<dbReference type="PROSITE" id="PS51371">
    <property type="entry name" value="CBS"/>
    <property type="match status" value="2"/>
</dbReference>
<comment type="miscellaneous">
    <text>It is not know if this bacteria is hemolytic.</text>
</comment>
<comment type="similarity">
    <text evidence="2">Belongs to the UPF0053 family. Hemolysin C subfamily.</text>
</comment>
<name>HLYC_RICBR</name>